<reference evidence="7" key="1">
    <citation type="journal article" date="1998" name="Science">
        <title>Genome sequence of the nematode C. elegans: a platform for investigating biology.</title>
        <authorList>
            <consortium name="The C. elegans sequencing consortium"/>
        </authorList>
    </citation>
    <scope>NUCLEOTIDE SEQUENCE [LARGE SCALE GENOMIC DNA]</scope>
    <source>
        <strain evidence="7">Bristol N2</strain>
    </source>
</reference>
<reference evidence="6" key="2">
    <citation type="journal article" date="2021" name="Biochim. Biophys. Acta">
        <title>Kinetic characterization and thermostability of C. elegans cytoplasmic and mitochondrial malate dehydrogenases.</title>
        <authorList>
            <person name="Thomas M.J."/>
            <person name="Cassidy E.R."/>
            <person name="Robinson D.S."/>
            <person name="Walstrom K.M."/>
        </authorList>
    </citation>
    <scope>FUNCTION</scope>
    <scope>CATALYTIC ACTIVITY</scope>
    <scope>BIOPHYSICOCHEMICAL PROPERTIES</scope>
</reference>
<comment type="function">
    <text evidence="4">Catalyzes the reversible conversion of (S)-malate to oxaloacetate in the cytoplasm where oxaloacetate is used for gluconeogenesis.</text>
</comment>
<comment type="catalytic activity">
    <reaction evidence="4">
        <text>(S)-malate + NAD(+) = oxaloacetate + NADH + H(+)</text>
        <dbReference type="Rhea" id="RHEA:21432"/>
        <dbReference type="ChEBI" id="CHEBI:15378"/>
        <dbReference type="ChEBI" id="CHEBI:15589"/>
        <dbReference type="ChEBI" id="CHEBI:16452"/>
        <dbReference type="ChEBI" id="CHEBI:57540"/>
        <dbReference type="ChEBI" id="CHEBI:57945"/>
        <dbReference type="EC" id="1.1.1.37"/>
    </reaction>
</comment>
<comment type="biophysicochemical properties">
    <kinetics>
        <KM evidence="4">54 uM for oxaloacetate (at 24 degrees Celsius and pH 7.5)</KM>
        <KM evidence="4">50 uM for oxaloacetate (at 24 degrees Celsius and pH 7.5, endogenous protein)</KM>
        <KM evidence="4">61 uM for NADH (at 24 degrees Celsius and pH 7.5)</KM>
        <text evidence="4">kcat is 350 sec(-1) with NADH as substrate (at 24 degrees Celsius and pH 7.5).</text>
    </kinetics>
    <temperatureDependence>
        <text evidence="4">Optimum temperature is 40 degrees Celsius.</text>
    </temperatureDependence>
</comment>
<comment type="subunit">
    <text evidence="1">Homodimer.</text>
</comment>
<comment type="subcellular location">
    <subcellularLocation>
        <location evidence="6">Cytoplasm</location>
    </subcellularLocation>
</comment>
<comment type="similarity">
    <text evidence="6">Belongs to the LDH/MDH superfamily. MDH type 2 family.</text>
</comment>
<feature type="chain" id="PRO_0000454789" description="Malate dehydrogenase, cytoplasmic">
    <location>
        <begin position="1"/>
        <end position="336"/>
    </location>
</feature>
<feature type="active site" description="Proton acceptor" evidence="2">
    <location>
        <position position="188"/>
    </location>
</feature>
<feature type="binding site" evidence="1">
    <location>
        <begin position="11"/>
        <end position="17"/>
    </location>
    <ligand>
        <name>NAD(+)</name>
        <dbReference type="ChEBI" id="CHEBI:57540"/>
    </ligand>
</feature>
<feature type="binding site" evidence="1">
    <location>
        <position position="42"/>
    </location>
    <ligand>
        <name>NAD(+)</name>
        <dbReference type="ChEBI" id="CHEBI:57540"/>
    </ligand>
</feature>
<feature type="binding site" evidence="1">
    <location>
        <position position="92"/>
    </location>
    <ligand>
        <name>substrate</name>
    </ligand>
</feature>
<feature type="binding site" evidence="3">
    <location>
        <position position="98"/>
    </location>
    <ligand>
        <name>substrate</name>
    </ligand>
</feature>
<feature type="binding site" evidence="1">
    <location>
        <position position="105"/>
    </location>
    <ligand>
        <name>NAD(+)</name>
        <dbReference type="ChEBI" id="CHEBI:57540"/>
    </ligand>
</feature>
<feature type="binding site" evidence="1">
    <location>
        <position position="112"/>
    </location>
    <ligand>
        <name>NAD(+)</name>
        <dbReference type="ChEBI" id="CHEBI:57540"/>
    </ligand>
</feature>
<feature type="binding site" evidence="1">
    <location>
        <begin position="129"/>
        <end position="131"/>
    </location>
    <ligand>
        <name>NAD(+)</name>
        <dbReference type="ChEBI" id="CHEBI:57540"/>
    </ligand>
</feature>
<feature type="binding site" evidence="3">
    <location>
        <position position="131"/>
    </location>
    <ligand>
        <name>substrate</name>
    </ligand>
</feature>
<feature type="binding site" evidence="3">
    <location>
        <position position="163"/>
    </location>
    <ligand>
        <name>substrate</name>
    </ligand>
</feature>
<name>MDHC_CAEEL</name>
<keyword id="KW-0963">Cytoplasm</keyword>
<keyword id="KW-0520">NAD</keyword>
<keyword id="KW-0560">Oxidoreductase</keyword>
<keyword id="KW-1185">Reference proteome</keyword>
<sequence length="336" mass="35806">MSAPLRVLVTGAAGQIGYSIVIRIADGTVFGKEQPVELVLLDVPQCSNILEGVVFELQDCALPTLFSVVAVTDEKSAFTGIDYAFLVGAMPRREGMERKDLLAANVKIFKSQGKALAEYAKPTTKVIVVGNPANTNAFIAAKYAAGKIPAKNFSAMTRLDHNRALAQLALKTGTTIGNVKNVIIWGNHSGTQFPDVTHATVNKNGTETDAYAAVGDNAFLQGPFIATVQKRGGVIIEKRKLSSAMSAAKAACDHIHDWHFGTKAGQFVSMAVPSDGSYGIPQGLIFSFPVTIEGGEWKIVQGLSFDDFAKGKIAATTKELEEERDDALKACDDANI</sequence>
<protein>
    <recommendedName>
        <fullName evidence="5">Malate dehydrogenase, cytoplasmic</fullName>
        <ecNumber evidence="4">1.1.1.37</ecNumber>
    </recommendedName>
</protein>
<evidence type="ECO:0000250" key="1">
    <source>
        <dbReference type="UniProtKB" id="P11708"/>
    </source>
</evidence>
<evidence type="ECO:0000255" key="2">
    <source>
        <dbReference type="PIRSR" id="PIRSR000102-1"/>
    </source>
</evidence>
<evidence type="ECO:0000255" key="3">
    <source>
        <dbReference type="PIRSR" id="PIRSR000102-2"/>
    </source>
</evidence>
<evidence type="ECO:0000269" key="4">
    <source>
    </source>
</evidence>
<evidence type="ECO:0000303" key="5">
    <source>
    </source>
</evidence>
<evidence type="ECO:0000305" key="6"/>
<evidence type="ECO:0000312" key="7">
    <source>
        <dbReference type="Proteomes" id="UP000001940"/>
    </source>
</evidence>
<evidence type="ECO:0000312" key="8">
    <source>
        <dbReference type="WormBase" id="F46E10.10"/>
    </source>
</evidence>
<organism evidence="7">
    <name type="scientific">Caenorhabditis elegans</name>
    <dbReference type="NCBI Taxonomy" id="6239"/>
    <lineage>
        <taxon>Eukaryota</taxon>
        <taxon>Metazoa</taxon>
        <taxon>Ecdysozoa</taxon>
        <taxon>Nematoda</taxon>
        <taxon>Chromadorea</taxon>
        <taxon>Rhabditida</taxon>
        <taxon>Rhabditina</taxon>
        <taxon>Rhabditomorpha</taxon>
        <taxon>Rhabditoidea</taxon>
        <taxon>Rhabditidae</taxon>
        <taxon>Peloderinae</taxon>
        <taxon>Caenorhabditis</taxon>
    </lineage>
</organism>
<gene>
    <name evidence="5 8" type="primary">mdh-1</name>
    <name evidence="8" type="ORF">F46E10.10</name>
</gene>
<accession>Q9UAV5</accession>
<proteinExistence type="evidence at protein level"/>
<dbReference type="EC" id="1.1.1.37" evidence="4"/>
<dbReference type="EMBL" id="BX284605">
    <property type="protein sequence ID" value="CCD71316.1"/>
    <property type="molecule type" value="Genomic_DNA"/>
</dbReference>
<dbReference type="PIR" id="T33966">
    <property type="entry name" value="T33966"/>
</dbReference>
<dbReference type="RefSeq" id="NP_504656.1">
    <property type="nucleotide sequence ID" value="NM_072255.4"/>
</dbReference>
<dbReference type="SMR" id="Q9UAV5"/>
<dbReference type="DIP" id="DIP-25233N"/>
<dbReference type="FunCoup" id="Q9UAV5">
    <property type="interactions" value="1356"/>
</dbReference>
<dbReference type="STRING" id="6239.F46E10.10a.1"/>
<dbReference type="PaxDb" id="6239-F46E10.10a"/>
<dbReference type="PeptideAtlas" id="Q9UAV5"/>
<dbReference type="EnsemblMetazoa" id="F46E10.10.1">
    <property type="protein sequence ID" value="F46E10.10.1"/>
    <property type="gene ID" value="WBGene00018491"/>
</dbReference>
<dbReference type="GeneID" id="179041"/>
<dbReference type="KEGG" id="cel:CELE_F46E10.10"/>
<dbReference type="UCSC" id="F46E10.10c.1">
    <property type="organism name" value="c. elegans"/>
</dbReference>
<dbReference type="AGR" id="WB:WBGene00018491"/>
<dbReference type="CTD" id="179041"/>
<dbReference type="WormBase" id="F46E10.10">
    <property type="protein sequence ID" value="CE20820"/>
    <property type="gene ID" value="WBGene00018491"/>
    <property type="gene designation" value="mdh-1"/>
</dbReference>
<dbReference type="eggNOG" id="KOG1496">
    <property type="taxonomic scope" value="Eukaryota"/>
</dbReference>
<dbReference type="GeneTree" id="ENSGT00530000063410"/>
<dbReference type="HOGENOM" id="CLU_040727_2_0_1"/>
<dbReference type="InParanoid" id="Q9UAV5"/>
<dbReference type="OMA" id="HTWVNGT"/>
<dbReference type="OrthoDB" id="4069699at2759"/>
<dbReference type="PhylomeDB" id="Q9UAV5"/>
<dbReference type="Reactome" id="R-CEL-9856872">
    <property type="pathway name" value="Malate-aspartate shuttle"/>
</dbReference>
<dbReference type="PRO" id="PR:Q9UAV5"/>
<dbReference type="Proteomes" id="UP000001940">
    <property type="component" value="Chromosome V"/>
</dbReference>
<dbReference type="Bgee" id="WBGene00018491">
    <property type="expression patterns" value="Expressed in adult organism and 4 other cell types or tissues"/>
</dbReference>
<dbReference type="GO" id="GO:0005829">
    <property type="term" value="C:cytosol"/>
    <property type="evidence" value="ECO:0000318"/>
    <property type="project" value="GO_Central"/>
</dbReference>
<dbReference type="GO" id="GO:0030060">
    <property type="term" value="F:L-malate dehydrogenase (NAD+) activity"/>
    <property type="evidence" value="ECO:0000314"/>
    <property type="project" value="UniProtKB"/>
</dbReference>
<dbReference type="GO" id="GO:0006108">
    <property type="term" value="P:malate metabolic process"/>
    <property type="evidence" value="ECO:0000314"/>
    <property type="project" value="UniProtKB"/>
</dbReference>
<dbReference type="GO" id="GO:0006734">
    <property type="term" value="P:NADH metabolic process"/>
    <property type="evidence" value="ECO:0000318"/>
    <property type="project" value="GO_Central"/>
</dbReference>
<dbReference type="GO" id="GO:0006107">
    <property type="term" value="P:oxaloacetate metabolic process"/>
    <property type="evidence" value="ECO:0000318"/>
    <property type="project" value="GO_Central"/>
</dbReference>
<dbReference type="GO" id="GO:0006099">
    <property type="term" value="P:tricarboxylic acid cycle"/>
    <property type="evidence" value="ECO:0000318"/>
    <property type="project" value="GO_Central"/>
</dbReference>
<dbReference type="CDD" id="cd01336">
    <property type="entry name" value="MDH_cytoplasmic_cytosolic"/>
    <property type="match status" value="1"/>
</dbReference>
<dbReference type="FunFam" id="3.40.50.720:FF:000010">
    <property type="entry name" value="Malate dehydrogenase"/>
    <property type="match status" value="1"/>
</dbReference>
<dbReference type="FunFam" id="3.90.110.10:FF:000002">
    <property type="entry name" value="Malate dehydrogenase"/>
    <property type="match status" value="1"/>
</dbReference>
<dbReference type="Gene3D" id="3.90.110.10">
    <property type="entry name" value="Lactate dehydrogenase/glycoside hydrolase, family 4, C-terminal"/>
    <property type="match status" value="1"/>
</dbReference>
<dbReference type="Gene3D" id="3.40.50.720">
    <property type="entry name" value="NAD(P)-binding Rossmann-like Domain"/>
    <property type="match status" value="1"/>
</dbReference>
<dbReference type="HAMAP" id="MF_01517">
    <property type="entry name" value="Malate_dehydrog_2"/>
    <property type="match status" value="1"/>
</dbReference>
<dbReference type="InterPro" id="IPR001557">
    <property type="entry name" value="L-lactate/malate_DH"/>
</dbReference>
<dbReference type="InterPro" id="IPR022383">
    <property type="entry name" value="Lactate/malate_DH_C"/>
</dbReference>
<dbReference type="InterPro" id="IPR001236">
    <property type="entry name" value="Lactate/malate_DH_N"/>
</dbReference>
<dbReference type="InterPro" id="IPR015955">
    <property type="entry name" value="Lactate_DH/Glyco_Ohase_4_C"/>
</dbReference>
<dbReference type="InterPro" id="IPR001252">
    <property type="entry name" value="Malate_DH_AS"/>
</dbReference>
<dbReference type="InterPro" id="IPR011274">
    <property type="entry name" value="Malate_DH_NAD-dep_euk"/>
</dbReference>
<dbReference type="InterPro" id="IPR010945">
    <property type="entry name" value="Malate_DH_type2"/>
</dbReference>
<dbReference type="InterPro" id="IPR036291">
    <property type="entry name" value="NAD(P)-bd_dom_sf"/>
</dbReference>
<dbReference type="NCBIfam" id="TIGR01759">
    <property type="entry name" value="MalateDH-SF1"/>
    <property type="match status" value="1"/>
</dbReference>
<dbReference type="NCBIfam" id="TIGR01758">
    <property type="entry name" value="MDH_euk_cyt"/>
    <property type="match status" value="1"/>
</dbReference>
<dbReference type="NCBIfam" id="NF003916">
    <property type="entry name" value="PRK05442.1"/>
    <property type="match status" value="1"/>
</dbReference>
<dbReference type="PANTHER" id="PTHR23382">
    <property type="entry name" value="MALATE DEHYDROGENASE"/>
    <property type="match status" value="1"/>
</dbReference>
<dbReference type="Pfam" id="PF02866">
    <property type="entry name" value="Ldh_1_C"/>
    <property type="match status" value="1"/>
</dbReference>
<dbReference type="Pfam" id="PF00056">
    <property type="entry name" value="Ldh_1_N"/>
    <property type="match status" value="1"/>
</dbReference>
<dbReference type="PIRSF" id="PIRSF000102">
    <property type="entry name" value="Lac_mal_DH"/>
    <property type="match status" value="1"/>
</dbReference>
<dbReference type="SUPFAM" id="SSF56327">
    <property type="entry name" value="LDH C-terminal domain-like"/>
    <property type="match status" value="1"/>
</dbReference>
<dbReference type="SUPFAM" id="SSF51735">
    <property type="entry name" value="NAD(P)-binding Rossmann-fold domains"/>
    <property type="match status" value="1"/>
</dbReference>
<dbReference type="PROSITE" id="PS00068">
    <property type="entry name" value="MDH"/>
    <property type="match status" value="1"/>
</dbReference>